<geneLocation type="plastid"/>
<keyword id="KW-0934">Plastid</keyword>
<keyword id="KW-0687">Ribonucleoprotein</keyword>
<keyword id="KW-0689">Ribosomal protein</keyword>
<keyword id="KW-0694">RNA-binding</keyword>
<keyword id="KW-0699">rRNA-binding</keyword>
<reference key="1">
    <citation type="journal article" date="2007" name="BMC Plant Biol.">
        <title>Complete plastid genome sequences suggest strong selection for retention of photosynthetic genes in the parasitic plant genus Cuscuta.</title>
        <authorList>
            <person name="McNeal J.R."/>
            <person name="Kuehl J.V."/>
            <person name="Boore J.L."/>
            <person name="dePamphilis C.W."/>
        </authorList>
    </citation>
    <scope>NUCLEOTIDE SEQUENCE [LARGE SCALE GENOMIC DNA]</scope>
</reference>
<organism>
    <name type="scientific">Cuscuta obtusiflora</name>
    <name type="common">Peruvian dodder</name>
    <dbReference type="NCBI Taxonomy" id="437280"/>
    <lineage>
        <taxon>Eukaryota</taxon>
        <taxon>Viridiplantae</taxon>
        <taxon>Streptophyta</taxon>
        <taxon>Embryophyta</taxon>
        <taxon>Tracheophyta</taxon>
        <taxon>Spermatophyta</taxon>
        <taxon>Magnoliopsida</taxon>
        <taxon>eudicotyledons</taxon>
        <taxon>Gunneridae</taxon>
        <taxon>Pentapetalae</taxon>
        <taxon>asterids</taxon>
        <taxon>lamiids</taxon>
        <taxon>Solanales</taxon>
        <taxon>Convolvulaceae</taxon>
        <taxon>Cuscuteae</taxon>
        <taxon>Cuscuta</taxon>
        <taxon>Cuscuta subgen. Grammica</taxon>
        <taxon>Cuscuta sect. Cleistogrammica</taxon>
    </lineage>
</organism>
<sequence>MTRIKRGSIARARRTKIRFFASKFRGSHSRLTRSIIQQGIRAFVSSQRDRDKKKRDFRRLWITRLNAAIRAIGVGYSYSASIHNLYKSQLILNRKILTQIAILNRNCLYMISNEILKSGV</sequence>
<protein>
    <recommendedName>
        <fullName evidence="1">Large ribosomal subunit protein bL20c</fullName>
    </recommendedName>
    <alternativeName>
        <fullName evidence="2">50S ribosomal protein L20, plastid</fullName>
    </alternativeName>
</protein>
<accession>A8W3K6</accession>
<feature type="chain" id="PRO_0000355499" description="Large ribosomal subunit protein bL20c">
    <location>
        <begin position="1"/>
        <end position="120"/>
    </location>
</feature>
<name>RK20_CUSOB</name>
<evidence type="ECO:0000255" key="1">
    <source>
        <dbReference type="HAMAP-Rule" id="MF_00382"/>
    </source>
</evidence>
<evidence type="ECO:0000305" key="2"/>
<proteinExistence type="inferred from homology"/>
<comment type="function">
    <text evidence="1">Binds directly to 23S ribosomal RNA and is necessary for the in vitro assembly process of the 50S ribosomal subunit. It is not involved in the protein synthesizing functions of that subunit.</text>
</comment>
<comment type="subcellular location">
    <subcellularLocation>
        <location>Plastid</location>
    </subcellularLocation>
</comment>
<comment type="similarity">
    <text evidence="1">Belongs to the bacterial ribosomal protein bL20 family.</text>
</comment>
<comment type="caution">
    <text evidence="2">Only inflorescences, fruits, starved seedlings and stressed stem tips are green in this organism.</text>
</comment>
<dbReference type="EMBL" id="EU189133">
    <property type="protein sequence ID" value="ABW20581.1"/>
    <property type="molecule type" value="Genomic_DNA"/>
</dbReference>
<dbReference type="RefSeq" id="YP_001531236.1">
    <property type="nucleotide sequence ID" value="NC_009949.1"/>
</dbReference>
<dbReference type="SMR" id="A8W3K6"/>
<dbReference type="GeneID" id="5714806"/>
<dbReference type="GO" id="GO:0009536">
    <property type="term" value="C:plastid"/>
    <property type="evidence" value="ECO:0007669"/>
    <property type="project" value="UniProtKB-SubCell"/>
</dbReference>
<dbReference type="GO" id="GO:1990904">
    <property type="term" value="C:ribonucleoprotein complex"/>
    <property type="evidence" value="ECO:0007669"/>
    <property type="project" value="UniProtKB-KW"/>
</dbReference>
<dbReference type="GO" id="GO:0005840">
    <property type="term" value="C:ribosome"/>
    <property type="evidence" value="ECO:0007669"/>
    <property type="project" value="UniProtKB-KW"/>
</dbReference>
<dbReference type="GO" id="GO:0019843">
    <property type="term" value="F:rRNA binding"/>
    <property type="evidence" value="ECO:0007669"/>
    <property type="project" value="UniProtKB-KW"/>
</dbReference>
<dbReference type="GO" id="GO:0003735">
    <property type="term" value="F:structural constituent of ribosome"/>
    <property type="evidence" value="ECO:0007669"/>
    <property type="project" value="InterPro"/>
</dbReference>
<dbReference type="GO" id="GO:0006412">
    <property type="term" value="P:translation"/>
    <property type="evidence" value="ECO:0007669"/>
    <property type="project" value="InterPro"/>
</dbReference>
<dbReference type="CDD" id="cd07026">
    <property type="entry name" value="Ribosomal_L20"/>
    <property type="match status" value="1"/>
</dbReference>
<dbReference type="FunFam" id="1.10.1900.20:FF:000001">
    <property type="entry name" value="50S ribosomal protein L20"/>
    <property type="match status" value="1"/>
</dbReference>
<dbReference type="Gene3D" id="6.10.160.10">
    <property type="match status" value="1"/>
</dbReference>
<dbReference type="Gene3D" id="1.10.1900.20">
    <property type="entry name" value="Ribosomal protein L20"/>
    <property type="match status" value="1"/>
</dbReference>
<dbReference type="HAMAP" id="MF_00382">
    <property type="entry name" value="Ribosomal_bL20"/>
    <property type="match status" value="1"/>
</dbReference>
<dbReference type="InterPro" id="IPR005813">
    <property type="entry name" value="Ribosomal_bL20"/>
</dbReference>
<dbReference type="InterPro" id="IPR049946">
    <property type="entry name" value="RIBOSOMAL_L20_CS"/>
</dbReference>
<dbReference type="InterPro" id="IPR035566">
    <property type="entry name" value="Ribosomal_protein_bL20_C"/>
</dbReference>
<dbReference type="NCBIfam" id="TIGR01032">
    <property type="entry name" value="rplT_bact"/>
    <property type="match status" value="1"/>
</dbReference>
<dbReference type="PANTHER" id="PTHR10986">
    <property type="entry name" value="39S RIBOSOMAL PROTEIN L20"/>
    <property type="match status" value="1"/>
</dbReference>
<dbReference type="Pfam" id="PF00453">
    <property type="entry name" value="Ribosomal_L20"/>
    <property type="match status" value="1"/>
</dbReference>
<dbReference type="PRINTS" id="PR00062">
    <property type="entry name" value="RIBOSOMALL20"/>
</dbReference>
<dbReference type="SUPFAM" id="SSF74731">
    <property type="entry name" value="Ribosomal protein L20"/>
    <property type="match status" value="1"/>
</dbReference>
<dbReference type="PROSITE" id="PS00937">
    <property type="entry name" value="RIBOSOMAL_L20"/>
    <property type="match status" value="1"/>
</dbReference>
<gene>
    <name evidence="1" type="primary">rpl20</name>
</gene>